<gene>
    <name evidence="1" type="primary">rps19</name>
    <name type="ordered locus">Hlac_2445</name>
</gene>
<sequence>MSSDYRTGREGKEFAYRGHSLDELQEMDVDEVAELLPARQRRSIVRGLGTEQQKLLEKVRSRDKETTADNPIRTHLRDMPILPEFVGVTFSVYNGHSFERVQVEPEMIGHFLGEFHLTRSTVEHGQAGIGATRSSKFVPLK</sequence>
<reference key="1">
    <citation type="journal article" date="2016" name="Stand. Genomic Sci.">
        <title>Complete genome sequence of the Antarctic Halorubrum lacusprofundi type strain ACAM 34.</title>
        <authorList>
            <person name="Anderson I.J."/>
            <person name="DasSarma P."/>
            <person name="Lucas S."/>
            <person name="Copeland A."/>
            <person name="Lapidus A."/>
            <person name="Del Rio T.G."/>
            <person name="Tice H."/>
            <person name="Dalin E."/>
            <person name="Bruce D.C."/>
            <person name="Goodwin L."/>
            <person name="Pitluck S."/>
            <person name="Sims D."/>
            <person name="Brettin T.S."/>
            <person name="Detter J.C."/>
            <person name="Han C.S."/>
            <person name="Larimer F."/>
            <person name="Hauser L."/>
            <person name="Land M."/>
            <person name="Ivanova N."/>
            <person name="Richardson P."/>
            <person name="Cavicchioli R."/>
            <person name="DasSarma S."/>
            <person name="Woese C.R."/>
            <person name="Kyrpides N.C."/>
        </authorList>
    </citation>
    <scope>NUCLEOTIDE SEQUENCE [LARGE SCALE GENOMIC DNA]</scope>
    <source>
        <strain>ATCC 49239 / DSM 5036 / JCM 8891 / ACAM 34</strain>
    </source>
</reference>
<evidence type="ECO:0000255" key="1">
    <source>
        <dbReference type="HAMAP-Rule" id="MF_00531"/>
    </source>
</evidence>
<evidence type="ECO:0000305" key="2"/>
<protein>
    <recommendedName>
        <fullName evidence="1">Small ribosomal subunit protein uS19</fullName>
    </recommendedName>
    <alternativeName>
        <fullName evidence="2">30S ribosomal protein S19</fullName>
    </alternativeName>
</protein>
<keyword id="KW-1185">Reference proteome</keyword>
<keyword id="KW-0687">Ribonucleoprotein</keyword>
<keyword id="KW-0689">Ribosomal protein</keyword>
<keyword id="KW-0694">RNA-binding</keyword>
<keyword id="KW-0699">rRNA-binding</keyword>
<dbReference type="EMBL" id="CP001365">
    <property type="protein sequence ID" value="ACM58020.1"/>
    <property type="molecule type" value="Genomic_DNA"/>
</dbReference>
<dbReference type="RefSeq" id="WP_015911132.1">
    <property type="nucleotide sequence ID" value="NC_012029.1"/>
</dbReference>
<dbReference type="SMR" id="B9LSS3"/>
<dbReference type="GeneID" id="7400563"/>
<dbReference type="KEGG" id="hla:Hlac_2445"/>
<dbReference type="eggNOG" id="arCOG04099">
    <property type="taxonomic scope" value="Archaea"/>
</dbReference>
<dbReference type="HOGENOM" id="CLU_097347_1_0_2"/>
<dbReference type="Proteomes" id="UP000000740">
    <property type="component" value="Chromosome 1"/>
</dbReference>
<dbReference type="GO" id="GO:0022627">
    <property type="term" value="C:cytosolic small ribosomal subunit"/>
    <property type="evidence" value="ECO:0007669"/>
    <property type="project" value="TreeGrafter"/>
</dbReference>
<dbReference type="GO" id="GO:0019843">
    <property type="term" value="F:rRNA binding"/>
    <property type="evidence" value="ECO:0007669"/>
    <property type="project" value="UniProtKB-UniRule"/>
</dbReference>
<dbReference type="GO" id="GO:0003735">
    <property type="term" value="F:structural constituent of ribosome"/>
    <property type="evidence" value="ECO:0007669"/>
    <property type="project" value="InterPro"/>
</dbReference>
<dbReference type="GO" id="GO:0000028">
    <property type="term" value="P:ribosomal small subunit assembly"/>
    <property type="evidence" value="ECO:0007669"/>
    <property type="project" value="TreeGrafter"/>
</dbReference>
<dbReference type="GO" id="GO:0006412">
    <property type="term" value="P:translation"/>
    <property type="evidence" value="ECO:0007669"/>
    <property type="project" value="UniProtKB-UniRule"/>
</dbReference>
<dbReference type="FunFam" id="3.30.860.10:FF:000002">
    <property type="entry name" value="40S ribosomal protein S15"/>
    <property type="match status" value="1"/>
</dbReference>
<dbReference type="Gene3D" id="3.30.860.10">
    <property type="entry name" value="30s Ribosomal Protein S19, Chain A"/>
    <property type="match status" value="1"/>
</dbReference>
<dbReference type="HAMAP" id="MF_00531">
    <property type="entry name" value="Ribosomal_uS19"/>
    <property type="match status" value="1"/>
</dbReference>
<dbReference type="InterPro" id="IPR002222">
    <property type="entry name" value="Ribosomal_uS19"/>
</dbReference>
<dbReference type="InterPro" id="IPR020934">
    <property type="entry name" value="Ribosomal_uS19_CS"/>
</dbReference>
<dbReference type="InterPro" id="IPR005713">
    <property type="entry name" value="Ribosomal_uS19_euk/arc"/>
</dbReference>
<dbReference type="InterPro" id="IPR023575">
    <property type="entry name" value="Ribosomal_uS19_SF"/>
</dbReference>
<dbReference type="NCBIfam" id="NF003121">
    <property type="entry name" value="PRK04038.1"/>
    <property type="match status" value="1"/>
</dbReference>
<dbReference type="NCBIfam" id="TIGR01025">
    <property type="entry name" value="uS19_arch"/>
    <property type="match status" value="1"/>
</dbReference>
<dbReference type="PANTHER" id="PTHR11880">
    <property type="entry name" value="RIBOSOMAL PROTEIN S19P FAMILY MEMBER"/>
    <property type="match status" value="1"/>
</dbReference>
<dbReference type="PANTHER" id="PTHR11880:SF2">
    <property type="entry name" value="SMALL RIBOSOMAL SUBUNIT PROTEIN US19"/>
    <property type="match status" value="1"/>
</dbReference>
<dbReference type="Pfam" id="PF00203">
    <property type="entry name" value="Ribosomal_S19"/>
    <property type="match status" value="1"/>
</dbReference>
<dbReference type="PIRSF" id="PIRSF002144">
    <property type="entry name" value="Ribosomal_S19"/>
    <property type="match status" value="1"/>
</dbReference>
<dbReference type="PRINTS" id="PR00975">
    <property type="entry name" value="RIBOSOMALS19"/>
</dbReference>
<dbReference type="SUPFAM" id="SSF54570">
    <property type="entry name" value="Ribosomal protein S19"/>
    <property type="match status" value="1"/>
</dbReference>
<dbReference type="PROSITE" id="PS00323">
    <property type="entry name" value="RIBOSOMAL_S19"/>
    <property type="match status" value="1"/>
</dbReference>
<proteinExistence type="inferred from homology"/>
<feature type="chain" id="PRO_1000146394" description="Small ribosomal subunit protein uS19">
    <location>
        <begin position="1"/>
        <end position="141"/>
    </location>
</feature>
<accession>B9LSS3</accession>
<organism>
    <name type="scientific">Halorubrum lacusprofundi (strain ATCC 49239 / DSM 5036 / JCM 8891 / ACAM 34)</name>
    <dbReference type="NCBI Taxonomy" id="416348"/>
    <lineage>
        <taxon>Archaea</taxon>
        <taxon>Methanobacteriati</taxon>
        <taxon>Methanobacteriota</taxon>
        <taxon>Stenosarchaea group</taxon>
        <taxon>Halobacteria</taxon>
        <taxon>Halobacteriales</taxon>
        <taxon>Haloferacaceae</taxon>
        <taxon>Halorubrum</taxon>
    </lineage>
</organism>
<comment type="function">
    <text evidence="1">Protein S19 forms a complex with S13 that binds strongly to the 16S ribosomal RNA.</text>
</comment>
<comment type="similarity">
    <text evidence="1">Belongs to the universal ribosomal protein uS19 family.</text>
</comment>
<name>RS19_HALLT</name>